<organism>
    <name type="scientific">Arabidopsis thaliana</name>
    <name type="common">Mouse-ear cress</name>
    <dbReference type="NCBI Taxonomy" id="3702"/>
    <lineage>
        <taxon>Eukaryota</taxon>
        <taxon>Viridiplantae</taxon>
        <taxon>Streptophyta</taxon>
        <taxon>Embryophyta</taxon>
        <taxon>Tracheophyta</taxon>
        <taxon>Spermatophyta</taxon>
        <taxon>Magnoliopsida</taxon>
        <taxon>eudicotyledons</taxon>
        <taxon>Gunneridae</taxon>
        <taxon>Pentapetalae</taxon>
        <taxon>rosids</taxon>
        <taxon>malvids</taxon>
        <taxon>Brassicales</taxon>
        <taxon>Brassicaceae</taxon>
        <taxon>Camelineae</taxon>
        <taxon>Arabidopsis</taxon>
    </lineage>
</organism>
<dbReference type="EMBL" id="AF144386">
    <property type="protein sequence ID" value="AAD35004.1"/>
    <property type="molecule type" value="mRNA"/>
</dbReference>
<dbReference type="EMBL" id="AB005242">
    <property type="protein sequence ID" value="BAB09607.1"/>
    <property type="molecule type" value="Genomic_DNA"/>
</dbReference>
<dbReference type="EMBL" id="CP002688">
    <property type="protein sequence ID" value="AED92288.1"/>
    <property type="molecule type" value="Genomic_DNA"/>
</dbReference>
<dbReference type="EMBL" id="AF370356">
    <property type="protein sequence ID" value="AAK44171.1"/>
    <property type="molecule type" value="mRNA"/>
</dbReference>
<dbReference type="EMBL" id="AY059086">
    <property type="protein sequence ID" value="AAL15192.1"/>
    <property type="molecule type" value="mRNA"/>
</dbReference>
<dbReference type="PDB" id="7C2B">
    <property type="method" value="X-ray"/>
    <property type="resolution" value="1.79 A"/>
    <property type="chains" value="C=71-185"/>
</dbReference>
<dbReference type="PDBsum" id="7C2B"/>
<dbReference type="SMR" id="Q9XFH9"/>
<dbReference type="BioGRID" id="16777">
    <property type="interactions" value="4"/>
</dbReference>
<dbReference type="FunCoup" id="Q9XFH9">
    <property type="interactions" value="746"/>
</dbReference>
<dbReference type="IntAct" id="Q9XFH9">
    <property type="interactions" value="2"/>
</dbReference>
<dbReference type="STRING" id="3702.Q9XFH9"/>
<dbReference type="GlyGen" id="Q9XFH9">
    <property type="glycosylation" value="1 site"/>
</dbReference>
<dbReference type="MetOSite" id="Q9XFH9"/>
<dbReference type="PaxDb" id="3702-AT5G16400.1"/>
<dbReference type="ProteomicsDB" id="228704"/>
<dbReference type="EnsemblPlants" id="AT5G16400.1">
    <property type="protein sequence ID" value="AT5G16400.1"/>
    <property type="gene ID" value="AT5G16400"/>
</dbReference>
<dbReference type="Gramene" id="AT5G16400.1">
    <property type="protein sequence ID" value="AT5G16400.1"/>
    <property type="gene ID" value="AT5G16400"/>
</dbReference>
<dbReference type="KEGG" id="ath:AT5G16400"/>
<dbReference type="Araport" id="AT5G16400"/>
<dbReference type="TAIR" id="AT5G16400">
    <property type="gene designation" value="TRXF2"/>
</dbReference>
<dbReference type="eggNOG" id="KOG0907">
    <property type="taxonomic scope" value="Eukaryota"/>
</dbReference>
<dbReference type="HOGENOM" id="CLU_090389_9_0_1"/>
<dbReference type="InParanoid" id="Q9XFH9"/>
<dbReference type="OMA" id="EELMFAI"/>
<dbReference type="PhylomeDB" id="Q9XFH9"/>
<dbReference type="PRO" id="PR:Q9XFH9"/>
<dbReference type="Proteomes" id="UP000006548">
    <property type="component" value="Chromosome 5"/>
</dbReference>
<dbReference type="ExpressionAtlas" id="Q9XFH9">
    <property type="expression patterns" value="baseline and differential"/>
</dbReference>
<dbReference type="GO" id="GO:0009507">
    <property type="term" value="C:chloroplast"/>
    <property type="evidence" value="ECO:0007005"/>
    <property type="project" value="TAIR"/>
</dbReference>
<dbReference type="GO" id="GO:0009570">
    <property type="term" value="C:chloroplast stroma"/>
    <property type="evidence" value="ECO:0000314"/>
    <property type="project" value="TAIR"/>
</dbReference>
<dbReference type="GO" id="GO:0009536">
    <property type="term" value="C:plastid"/>
    <property type="evidence" value="ECO:0007005"/>
    <property type="project" value="TAIR"/>
</dbReference>
<dbReference type="GO" id="GO:0008047">
    <property type="term" value="F:enzyme activator activity"/>
    <property type="evidence" value="ECO:0000314"/>
    <property type="project" value="TAIR"/>
</dbReference>
<dbReference type="GO" id="GO:0045454">
    <property type="term" value="P:cell redox homeostasis"/>
    <property type="evidence" value="ECO:0000316"/>
    <property type="project" value="TAIR"/>
</dbReference>
<dbReference type="GO" id="GO:0043085">
    <property type="term" value="P:positive regulation of catalytic activity"/>
    <property type="evidence" value="ECO:0000314"/>
    <property type="project" value="TAIR"/>
</dbReference>
<dbReference type="GO" id="GO:0009642">
    <property type="term" value="P:response to light intensity"/>
    <property type="evidence" value="ECO:0000316"/>
    <property type="project" value="TAIR"/>
</dbReference>
<dbReference type="CDD" id="cd02947">
    <property type="entry name" value="TRX_family"/>
    <property type="match status" value="1"/>
</dbReference>
<dbReference type="FunFam" id="3.40.30.10:FF:000250">
    <property type="entry name" value="Thioredoxin F-type, chloroplastic"/>
    <property type="match status" value="1"/>
</dbReference>
<dbReference type="Gene3D" id="3.40.30.10">
    <property type="entry name" value="Glutaredoxin"/>
    <property type="match status" value="1"/>
</dbReference>
<dbReference type="InterPro" id="IPR036249">
    <property type="entry name" value="Thioredoxin-like_sf"/>
</dbReference>
<dbReference type="InterPro" id="IPR017937">
    <property type="entry name" value="Thioredoxin_CS"/>
</dbReference>
<dbReference type="InterPro" id="IPR013766">
    <property type="entry name" value="Thioredoxin_domain"/>
</dbReference>
<dbReference type="PANTHER" id="PTHR46115">
    <property type="entry name" value="THIOREDOXIN-LIKE PROTEIN 1"/>
    <property type="match status" value="1"/>
</dbReference>
<dbReference type="Pfam" id="PF00085">
    <property type="entry name" value="Thioredoxin"/>
    <property type="match status" value="1"/>
</dbReference>
<dbReference type="PRINTS" id="PR00421">
    <property type="entry name" value="THIOREDOXIN"/>
</dbReference>
<dbReference type="SUPFAM" id="SSF52833">
    <property type="entry name" value="Thioredoxin-like"/>
    <property type="match status" value="1"/>
</dbReference>
<dbReference type="PROSITE" id="PS00194">
    <property type="entry name" value="THIOREDOXIN_1"/>
    <property type="match status" value="1"/>
</dbReference>
<dbReference type="PROSITE" id="PS51352">
    <property type="entry name" value="THIOREDOXIN_2"/>
    <property type="match status" value="1"/>
</dbReference>
<evidence type="ECO:0000250" key="1"/>
<evidence type="ECO:0000255" key="2"/>
<evidence type="ECO:0000255" key="3">
    <source>
        <dbReference type="PROSITE-ProRule" id="PRU00691"/>
    </source>
</evidence>
<evidence type="ECO:0000269" key="4">
    <source>
    </source>
</evidence>
<evidence type="ECO:0000305" key="5"/>
<evidence type="ECO:0007829" key="6">
    <source>
        <dbReference type="PDB" id="7C2B"/>
    </source>
</evidence>
<name>TRXF2_ARATH</name>
<gene>
    <name type="ordered locus">At5g16400</name>
    <name type="ORF">MQK4.13</name>
</gene>
<feature type="transit peptide" description="Chloroplast" evidence="2">
    <location>
        <begin position="1"/>
        <end status="unknown"/>
    </location>
</feature>
<feature type="chain" id="PRO_0000034157" description="Thioredoxin F2, chloroplastic">
    <location>
        <begin status="unknown"/>
        <end position="185"/>
    </location>
</feature>
<feature type="domain" description="Thioredoxin" evidence="3">
    <location>
        <begin position="59"/>
        <end position="184"/>
    </location>
</feature>
<feature type="active site" description="Nucleophile" evidence="1">
    <location>
        <position position="109"/>
    </location>
</feature>
<feature type="active site" description="Nucleophile" evidence="1">
    <location>
        <position position="112"/>
    </location>
</feature>
<feature type="site" description="Deprotonates C-terminal active site Cys" evidence="1">
    <location>
        <position position="103"/>
    </location>
</feature>
<feature type="site" description="Contributes to redox potential value" evidence="1">
    <location>
        <position position="110"/>
    </location>
</feature>
<feature type="site" description="Contributes to redox potential value" evidence="1">
    <location>
        <position position="111"/>
    </location>
</feature>
<feature type="modified residue" description="S-glutathionyl cysteine; transient" evidence="1">
    <location>
        <position position="136"/>
    </location>
</feature>
<feature type="disulfide bond" description="Redox-active" evidence="3">
    <location>
        <begin position="109"/>
        <end position="112"/>
    </location>
</feature>
<feature type="strand" evidence="6">
    <location>
        <begin position="79"/>
        <end position="83"/>
    </location>
</feature>
<feature type="turn" evidence="6">
    <location>
        <begin position="85"/>
        <end position="87"/>
    </location>
</feature>
<feature type="helix" evidence="6">
    <location>
        <begin position="88"/>
        <end position="94"/>
    </location>
</feature>
<feature type="turn" evidence="6">
    <location>
        <begin position="95"/>
        <end position="97"/>
    </location>
</feature>
<feature type="strand" evidence="6">
    <location>
        <begin position="100"/>
        <end position="105"/>
    </location>
</feature>
<feature type="helix" evidence="6">
    <location>
        <begin position="110"/>
        <end position="125"/>
    </location>
</feature>
<feature type="strand" evidence="6">
    <location>
        <begin position="129"/>
        <end position="135"/>
    </location>
</feature>
<feature type="turn" evidence="6">
    <location>
        <begin position="138"/>
        <end position="140"/>
    </location>
</feature>
<feature type="helix" evidence="6">
    <location>
        <begin position="141"/>
        <end position="147"/>
    </location>
</feature>
<feature type="strand" evidence="6">
    <location>
        <begin position="151"/>
        <end position="159"/>
    </location>
</feature>
<feature type="strand" evidence="6">
    <location>
        <begin position="162"/>
        <end position="170"/>
    </location>
</feature>
<feature type="helix" evidence="6">
    <location>
        <begin position="172"/>
        <end position="183"/>
    </location>
</feature>
<reference key="1">
    <citation type="journal article" date="1999" name="Trends Plant Sci.">
        <title>Plant thioredoxins and glutaredoxins: identity and putative roles.</title>
        <authorList>
            <person name="Meyer Y."/>
            <person name="Verdoucq L."/>
            <person name="Vignols F."/>
        </authorList>
    </citation>
    <scope>NUCLEOTIDE SEQUENCE [MRNA]</scope>
</reference>
<reference key="2">
    <citation type="journal article" date="1997" name="DNA Res.">
        <title>Structural analysis of Arabidopsis thaliana chromosome 5. I. Sequence features of the 1.6 Mb regions covered by twenty physically assigned P1 clones.</title>
        <authorList>
            <person name="Sato S."/>
            <person name="Kotani H."/>
            <person name="Nakamura Y."/>
            <person name="Kaneko T."/>
            <person name="Asamizu E."/>
            <person name="Fukami M."/>
            <person name="Miyajima N."/>
            <person name="Tabata S."/>
        </authorList>
    </citation>
    <scope>NUCLEOTIDE SEQUENCE [LARGE SCALE GENOMIC DNA]</scope>
    <source>
        <strain>cv. Columbia</strain>
    </source>
</reference>
<reference key="3">
    <citation type="journal article" date="2017" name="Plant J.">
        <title>Araport11: a complete reannotation of the Arabidopsis thaliana reference genome.</title>
        <authorList>
            <person name="Cheng C.Y."/>
            <person name="Krishnakumar V."/>
            <person name="Chan A.P."/>
            <person name="Thibaud-Nissen F."/>
            <person name="Schobel S."/>
            <person name="Town C.D."/>
        </authorList>
    </citation>
    <scope>GENOME REANNOTATION</scope>
    <source>
        <strain>cv. Columbia</strain>
    </source>
</reference>
<reference key="4">
    <citation type="journal article" date="2003" name="Science">
        <title>Empirical analysis of transcriptional activity in the Arabidopsis genome.</title>
        <authorList>
            <person name="Yamada K."/>
            <person name="Lim J."/>
            <person name="Dale J.M."/>
            <person name="Chen H."/>
            <person name="Shinn P."/>
            <person name="Palm C.J."/>
            <person name="Southwick A.M."/>
            <person name="Wu H.C."/>
            <person name="Kim C.J."/>
            <person name="Nguyen M."/>
            <person name="Pham P.K."/>
            <person name="Cheuk R.F."/>
            <person name="Karlin-Newmann G."/>
            <person name="Liu S.X."/>
            <person name="Lam B."/>
            <person name="Sakano H."/>
            <person name="Wu T."/>
            <person name="Yu G."/>
            <person name="Miranda M."/>
            <person name="Quach H.L."/>
            <person name="Tripp M."/>
            <person name="Chang C.H."/>
            <person name="Lee J.M."/>
            <person name="Toriumi M.J."/>
            <person name="Chan M.M."/>
            <person name="Tang C.C."/>
            <person name="Onodera C.S."/>
            <person name="Deng J.M."/>
            <person name="Akiyama K."/>
            <person name="Ansari Y."/>
            <person name="Arakawa T."/>
            <person name="Banh J."/>
            <person name="Banno F."/>
            <person name="Bowser L."/>
            <person name="Brooks S.Y."/>
            <person name="Carninci P."/>
            <person name="Chao Q."/>
            <person name="Choy N."/>
            <person name="Enju A."/>
            <person name="Goldsmith A.D."/>
            <person name="Gurjal M."/>
            <person name="Hansen N.F."/>
            <person name="Hayashizaki Y."/>
            <person name="Johnson-Hopson C."/>
            <person name="Hsuan V.W."/>
            <person name="Iida K."/>
            <person name="Karnes M."/>
            <person name="Khan S."/>
            <person name="Koesema E."/>
            <person name="Ishida J."/>
            <person name="Jiang P.X."/>
            <person name="Jones T."/>
            <person name="Kawai J."/>
            <person name="Kamiya A."/>
            <person name="Meyers C."/>
            <person name="Nakajima M."/>
            <person name="Narusaka M."/>
            <person name="Seki M."/>
            <person name="Sakurai T."/>
            <person name="Satou M."/>
            <person name="Tamse R."/>
            <person name="Vaysberg M."/>
            <person name="Wallender E.K."/>
            <person name="Wong C."/>
            <person name="Yamamura Y."/>
            <person name="Yuan S."/>
            <person name="Shinozaki K."/>
            <person name="Davis R.W."/>
            <person name="Theologis A."/>
            <person name="Ecker J.R."/>
        </authorList>
    </citation>
    <scope>NUCLEOTIDE SEQUENCE [LARGE SCALE MRNA]</scope>
    <source>
        <strain>cv. Columbia</strain>
    </source>
</reference>
<reference key="5">
    <citation type="journal article" date="2009" name="Mol. Plant">
        <title>Comparative genomic study of the thioredoxin family in photosynthetic organisms with emphasis on Populus trichocarpa.</title>
        <authorList>
            <person name="Chibani K."/>
            <person name="Wingsle G."/>
            <person name="Jacquot J.P."/>
            <person name="Gelhaye E."/>
            <person name="Rouhier N."/>
        </authorList>
    </citation>
    <scope>GENE FAMILY</scope>
    <scope>NOMENCLATURE</scope>
</reference>
<reference key="6">
    <citation type="journal article" date="2009" name="Plant Mol. Biol.">
        <title>A novel extended family of stromal thioredoxins.</title>
        <authorList>
            <person name="Cain P."/>
            <person name="Hall M."/>
            <person name="Schroder W.P."/>
            <person name="Kieselbach T."/>
            <person name="Robinson C."/>
        </authorList>
    </citation>
    <scope>SUBCELLULAR LOCATION</scope>
</reference>
<proteinExistence type="evidence at protein level"/>
<sequence>MPLSLRLAPSPTSFRYSPITSTGAGGFSPVKQHCRIPNSGVATKIGFCSGGGGVLDSGRRIGSCVVRCSLETVNVTVGQVTEVDKDTFWPIVKAAGDKIVVLDMYTQWCGPCKVIAPKYKELSEKYQDMVFLKLDCNQDNKPLAKELGIRVVPTFKILKDNKVVKEVTGAKYEDLLAAIEAARSG</sequence>
<keyword id="KW-0002">3D-structure</keyword>
<keyword id="KW-0150">Chloroplast</keyword>
<keyword id="KW-1015">Disulfide bond</keyword>
<keyword id="KW-0249">Electron transport</keyword>
<keyword id="KW-0318">Glutathionylation</keyword>
<keyword id="KW-0934">Plastid</keyword>
<keyword id="KW-0676">Redox-active center</keyword>
<keyword id="KW-1185">Reference proteome</keyword>
<keyword id="KW-0809">Transit peptide</keyword>
<keyword id="KW-0813">Transport</keyword>
<comment type="function">
    <text evidence="1">Probable thiol-disulfide oxidoreductase involved in the redox regulation of enzymes of both reductive pentose phosphate pathway (Calvin-Benson cycle) and oxidative pentose phosphate pathway.</text>
</comment>
<comment type="interaction">
    <interactant intactId="EBI-25516100">
        <id>Q9XFH9</id>
    </interactant>
    <interactant intactId="EBI-4426649">
        <id>Q17TI5</id>
        <label>BRX</label>
    </interactant>
    <organismsDiffer>false</organismsDiffer>
    <experiments>3</experiments>
</comment>
<comment type="interaction">
    <interactant intactId="EBI-25516100">
        <id>Q9XFH9</id>
    </interactant>
    <interactant intactId="EBI-25506855">
        <id>O23160</id>
        <label>MYB73</label>
    </interactant>
    <organismsDiffer>false</organismsDiffer>
    <experiments>3</experiments>
</comment>
<comment type="subcellular location">
    <subcellularLocation>
        <location evidence="4">Plastid</location>
        <location evidence="4">Chloroplast stroma</location>
    </subcellularLocation>
</comment>
<comment type="PTM">
    <text evidence="1">Glutathionylation at Cys-136 decreases its ability to be reduced by ferredoxin-thioredoxin reductase and reduces its efficiency in activating target chloroplastic enzymes.</text>
</comment>
<comment type="similarity">
    <text evidence="5">Belongs to the thioredoxin family. Plant F-type subfamily.</text>
</comment>
<accession>Q9XFH9</accession>
<protein>
    <recommendedName>
        <fullName>Thioredoxin F2, chloroplastic</fullName>
        <shortName>AtTrxf2</shortName>
    </recommendedName>
    <alternativeName>
        <fullName>Thioredoxin F1</fullName>
        <shortName>AtTrxf1</shortName>
    </alternativeName>
</protein>